<proteinExistence type="evidence at protein level"/>
<gene>
    <name type="ORF">PF14_0093</name>
    <name type="ORF">PF3D7_1409500</name>
</gene>
<organism>
    <name type="scientific">Plasmodium falciparum (isolate 3D7)</name>
    <dbReference type="NCBI Taxonomy" id="36329"/>
    <lineage>
        <taxon>Eukaryota</taxon>
        <taxon>Sar</taxon>
        <taxon>Alveolata</taxon>
        <taxon>Apicomplexa</taxon>
        <taxon>Aconoidasida</taxon>
        <taxon>Haemosporida</taxon>
        <taxon>Plasmodiidae</taxon>
        <taxon>Plasmodium</taxon>
        <taxon>Plasmodium (Laverania)</taxon>
    </lineage>
</organism>
<protein>
    <recommendedName>
        <fullName>Uncharacterized protein PF3D7_1409500</fullName>
    </recommendedName>
</protein>
<comment type="biotechnology">
    <text evidence="2">Possible candidate for an effective malaria vaccine as determined by epitope response in sera.</text>
</comment>
<reference key="1">
    <citation type="journal article" date="2002" name="Nature">
        <title>Genome sequence of the human malaria parasite Plasmodium falciparum.</title>
        <authorList>
            <person name="Gardner M.J."/>
            <person name="Hall N."/>
            <person name="Fung E."/>
            <person name="White O."/>
            <person name="Berriman M."/>
            <person name="Hyman R.W."/>
            <person name="Carlton J.M."/>
            <person name="Pain A."/>
            <person name="Nelson K.E."/>
            <person name="Bowman S."/>
            <person name="Paulsen I.T."/>
            <person name="James K.D."/>
            <person name="Eisen J.A."/>
            <person name="Rutherford K.M."/>
            <person name="Salzberg S.L."/>
            <person name="Craig A."/>
            <person name="Kyes S."/>
            <person name="Chan M.-S."/>
            <person name="Nene V."/>
            <person name="Shallom S.J."/>
            <person name="Suh B."/>
            <person name="Peterson J."/>
            <person name="Angiuoli S."/>
            <person name="Pertea M."/>
            <person name="Allen J."/>
            <person name="Selengut J."/>
            <person name="Haft D."/>
            <person name="Mather M.W."/>
            <person name="Vaidya A.B."/>
            <person name="Martin D.M.A."/>
            <person name="Fairlamb A.H."/>
            <person name="Fraunholz M.J."/>
            <person name="Roos D.S."/>
            <person name="Ralph S.A."/>
            <person name="McFadden G.I."/>
            <person name="Cummings L.M."/>
            <person name="Subramanian G.M."/>
            <person name="Mungall C."/>
            <person name="Venter J.C."/>
            <person name="Carucci D.J."/>
            <person name="Hoffman S.L."/>
            <person name="Newbold C."/>
            <person name="Davis R.W."/>
            <person name="Fraser C.M."/>
            <person name="Barrell B.G."/>
        </authorList>
    </citation>
    <scope>NUCLEOTIDE SEQUENCE [LARGE SCALE GENOMIC DNA]</scope>
    <source>
        <strain>3D7</strain>
    </source>
</reference>
<reference evidence="3" key="2">
    <citation type="journal article" date="2007" name="PLoS ONE">
        <title>Rapid identification of malaria vaccine candidates based on alpha-helical coiled coil protein motif.</title>
        <authorList>
            <person name="Villard V."/>
            <person name="Agak G.W."/>
            <person name="Frank G."/>
            <person name="Jafarshad A."/>
            <person name="Servis C."/>
            <person name="Nebie I."/>
            <person name="Sirima S.B."/>
            <person name="Felger I."/>
            <person name="Arevalo-Herrera M."/>
            <person name="Herrera S."/>
            <person name="Heitz F."/>
            <person name="Baecker V."/>
            <person name="Druilhe P."/>
            <person name="Kajava A.V."/>
            <person name="Corradin G."/>
        </authorList>
    </citation>
    <scope>SYNTHESIS OF 231-257</scope>
    <scope>POSSIBLE CANDIDATE MALARIA EPITOPE</scope>
</reference>
<accession>Q8IM00</accession>
<accession>A0A144A595</accession>
<keyword id="KW-0477">Merozoite</keyword>
<keyword id="KW-1185">Reference proteome</keyword>
<dbReference type="EMBL" id="LN999946">
    <property type="protein sequence ID" value="CZT99803.1"/>
    <property type="molecule type" value="Genomic_DNA"/>
</dbReference>
<dbReference type="RefSeq" id="XP_001348266.1">
    <property type="nucleotide sequence ID" value="XM_001348230.1"/>
</dbReference>
<dbReference type="SMR" id="Q8IM00"/>
<dbReference type="PaxDb" id="5833-PF14_0093"/>
<dbReference type="EnsemblProtists" id="CZT99803">
    <property type="protein sequence ID" value="CZT99803"/>
    <property type="gene ID" value="PF3D7_1409500"/>
</dbReference>
<dbReference type="GeneID" id="811674"/>
<dbReference type="KEGG" id="pfa:PF3D7_1409500"/>
<dbReference type="VEuPathDB" id="PlasmoDB:PF3D7_1409500"/>
<dbReference type="HOGENOM" id="CLU_328606_0_0_1"/>
<dbReference type="InParanoid" id="Q8IM00"/>
<dbReference type="OMA" id="DKINHKK"/>
<dbReference type="OrthoDB" id="10445795at2759"/>
<dbReference type="Proteomes" id="UP000001450">
    <property type="component" value="Chromosome 14"/>
</dbReference>
<feature type="chain" id="PRO_0000361763" description="Uncharacterized protein PF3D7_1409500">
    <location>
        <begin position="1"/>
        <end position="875"/>
    </location>
</feature>
<feature type="region of interest" description="Disordered" evidence="1">
    <location>
        <begin position="29"/>
        <end position="48"/>
    </location>
</feature>
<feature type="region of interest" description="Disordered" evidence="1">
    <location>
        <begin position="481"/>
        <end position="510"/>
    </location>
</feature>
<feature type="region of interest" description="Disordered" evidence="1">
    <location>
        <begin position="680"/>
        <end position="705"/>
    </location>
</feature>
<feature type="compositionally biased region" description="Low complexity" evidence="1">
    <location>
        <begin position="31"/>
        <end position="44"/>
    </location>
</feature>
<feature type="compositionally biased region" description="Basic and acidic residues" evidence="1">
    <location>
        <begin position="695"/>
        <end position="705"/>
    </location>
</feature>
<evidence type="ECO:0000256" key="1">
    <source>
        <dbReference type="SAM" id="MobiDB-lite"/>
    </source>
</evidence>
<evidence type="ECO:0000269" key="2">
    <source>
    </source>
</evidence>
<evidence type="ECO:0000305" key="3"/>
<name>YPF03_PLAF7</name>
<sequence length="875" mass="104076">MKDYNDNIHRPNPHNLYNNISLLCPPKMKGNSENLSTNNNPNLTGKNIKVSNRHDKMKDIHIHKLPDVENISSDMNPKSSKMFSFKNINHNKEENEIHLKDKYSFEKREDDMYNMSVSNMHKVPIHKQNIYSKNNYNTSVCLQQNKKETNNISYINNIHNTMCITNNKNDHSVEHKINIYNNKYNYNNTFLCNKKLCTQKIIQYIGKNQNTKHPLHSLYHTNVVGMNKFNSSNNLSDQINILNNNIQHINSTFNNLRQNNIYKNNDSIELFINNNLKSGDTNKYATFYKNVKISEKNNMYKQKEDKKQINNKNPYIFTCQKYFMRPSNVLHNIQNCGIHKKKKKKKKNHQIKHRSFHNIYKQINIINDQIDLINNKINKNSKDQNRAHILEISPLSLPSYIEYKNKNNNIFSSYFAHPNNKTHNFKKIKMIKKNISNPFNKEEPCGEKKNSPQVNDSKSFRYFDHSTCNNNYHNKEYMKKEQKSHLHSNHNINHEKGSDPSYNLNTKNTKNVTNTNDQTCIYEDHTFEKAVENNKVMYLKNKPIQSKLLKLNNQILNNTDQKKYEKCIDHGDTCNNKDEKNIKCTYKIDDILCSYNNGNNIKYEREVIKITNKYRNALEKWRYKFVHKNKTTKRNITSSNQKGKCNFNIFKINKHINKKKNKKIKKIESNKYGNMYNFVDKKVNNNQGNKKKNEKKNEKKNDKINDTINDKINHKINHKKNDKINHKKNDKINHKKNDKINHKKNDKINNKINHKKNMIPNQKPINNMIKYNIKNKKKIYNDTNDHADNRNIHSHIHKKVPNKKDNNINHMYYDNNNNINQPISYIHTAYDNVCHQINNDDHCIPLSCVIKNRKTRRSRKNKNLFNNKKNYTNEP</sequence>